<proteinExistence type="inferred from homology"/>
<organism>
    <name type="scientific">Phenylobacterium zucineum (strain HLK1)</name>
    <dbReference type="NCBI Taxonomy" id="450851"/>
    <lineage>
        <taxon>Bacteria</taxon>
        <taxon>Pseudomonadati</taxon>
        <taxon>Pseudomonadota</taxon>
        <taxon>Alphaproteobacteria</taxon>
        <taxon>Caulobacterales</taxon>
        <taxon>Caulobacteraceae</taxon>
        <taxon>Phenylobacterium</taxon>
    </lineage>
</organism>
<accession>B4R8T3</accession>
<reference key="1">
    <citation type="journal article" date="2008" name="BMC Genomics">
        <title>Complete genome of Phenylobacterium zucineum - a novel facultative intracellular bacterium isolated from human erythroleukemia cell line K562.</title>
        <authorList>
            <person name="Luo Y."/>
            <person name="Xu X."/>
            <person name="Ding Z."/>
            <person name="Liu Z."/>
            <person name="Zhang B."/>
            <person name="Yan Z."/>
            <person name="Sun J."/>
            <person name="Hu S."/>
            <person name="Hu X."/>
        </authorList>
    </citation>
    <scope>NUCLEOTIDE SEQUENCE [LARGE SCALE GENOMIC DNA]</scope>
    <source>
        <strain>HLK1</strain>
    </source>
</reference>
<dbReference type="EC" id="3.1.26.4" evidence="1"/>
<dbReference type="EMBL" id="CP000747">
    <property type="protein sequence ID" value="ACG79298.1"/>
    <property type="molecule type" value="Genomic_DNA"/>
</dbReference>
<dbReference type="RefSeq" id="WP_012523436.1">
    <property type="nucleotide sequence ID" value="NC_011144.1"/>
</dbReference>
<dbReference type="SMR" id="B4R8T3"/>
<dbReference type="STRING" id="450851.PHZ_c2889"/>
<dbReference type="KEGG" id="pzu:PHZ_c2889"/>
<dbReference type="eggNOG" id="COG0328">
    <property type="taxonomic scope" value="Bacteria"/>
</dbReference>
<dbReference type="HOGENOM" id="CLU_030894_6_0_5"/>
<dbReference type="OrthoDB" id="7845843at2"/>
<dbReference type="Proteomes" id="UP000001868">
    <property type="component" value="Chromosome"/>
</dbReference>
<dbReference type="GO" id="GO:0005737">
    <property type="term" value="C:cytoplasm"/>
    <property type="evidence" value="ECO:0007669"/>
    <property type="project" value="UniProtKB-SubCell"/>
</dbReference>
<dbReference type="GO" id="GO:0000287">
    <property type="term" value="F:magnesium ion binding"/>
    <property type="evidence" value="ECO:0007669"/>
    <property type="project" value="UniProtKB-UniRule"/>
</dbReference>
<dbReference type="GO" id="GO:0003676">
    <property type="term" value="F:nucleic acid binding"/>
    <property type="evidence" value="ECO:0007669"/>
    <property type="project" value="InterPro"/>
</dbReference>
<dbReference type="GO" id="GO:0004523">
    <property type="term" value="F:RNA-DNA hybrid ribonuclease activity"/>
    <property type="evidence" value="ECO:0007669"/>
    <property type="project" value="UniProtKB-UniRule"/>
</dbReference>
<dbReference type="GO" id="GO:0043137">
    <property type="term" value="P:DNA replication, removal of RNA primer"/>
    <property type="evidence" value="ECO:0007669"/>
    <property type="project" value="TreeGrafter"/>
</dbReference>
<dbReference type="CDD" id="cd09278">
    <property type="entry name" value="RNase_HI_prokaryote_like"/>
    <property type="match status" value="1"/>
</dbReference>
<dbReference type="FunFam" id="3.30.420.10:FF:000089">
    <property type="entry name" value="Ribonuclease H"/>
    <property type="match status" value="1"/>
</dbReference>
<dbReference type="Gene3D" id="3.30.420.10">
    <property type="entry name" value="Ribonuclease H-like superfamily/Ribonuclease H"/>
    <property type="match status" value="1"/>
</dbReference>
<dbReference type="HAMAP" id="MF_00042">
    <property type="entry name" value="RNase_H"/>
    <property type="match status" value="1"/>
</dbReference>
<dbReference type="InterPro" id="IPR050092">
    <property type="entry name" value="RNase_H"/>
</dbReference>
<dbReference type="InterPro" id="IPR012337">
    <property type="entry name" value="RNaseH-like_sf"/>
</dbReference>
<dbReference type="InterPro" id="IPR002156">
    <property type="entry name" value="RNaseH_domain"/>
</dbReference>
<dbReference type="InterPro" id="IPR036397">
    <property type="entry name" value="RNaseH_sf"/>
</dbReference>
<dbReference type="InterPro" id="IPR022892">
    <property type="entry name" value="RNaseHI"/>
</dbReference>
<dbReference type="NCBIfam" id="NF001236">
    <property type="entry name" value="PRK00203.1"/>
    <property type="match status" value="1"/>
</dbReference>
<dbReference type="PANTHER" id="PTHR10642">
    <property type="entry name" value="RIBONUCLEASE H1"/>
    <property type="match status" value="1"/>
</dbReference>
<dbReference type="PANTHER" id="PTHR10642:SF26">
    <property type="entry name" value="RIBONUCLEASE H1"/>
    <property type="match status" value="1"/>
</dbReference>
<dbReference type="Pfam" id="PF00075">
    <property type="entry name" value="RNase_H"/>
    <property type="match status" value="1"/>
</dbReference>
<dbReference type="SUPFAM" id="SSF53098">
    <property type="entry name" value="Ribonuclease H-like"/>
    <property type="match status" value="1"/>
</dbReference>
<dbReference type="PROSITE" id="PS50879">
    <property type="entry name" value="RNASE_H_1"/>
    <property type="match status" value="1"/>
</dbReference>
<feature type="chain" id="PRO_1000090906" description="Ribonuclease H">
    <location>
        <begin position="1"/>
        <end position="153"/>
    </location>
</feature>
<feature type="domain" description="RNase H type-1" evidence="2">
    <location>
        <begin position="1"/>
        <end position="142"/>
    </location>
</feature>
<feature type="binding site" evidence="1">
    <location>
        <position position="10"/>
    </location>
    <ligand>
        <name>Mg(2+)</name>
        <dbReference type="ChEBI" id="CHEBI:18420"/>
        <label>1</label>
    </ligand>
</feature>
<feature type="binding site" evidence="1">
    <location>
        <position position="10"/>
    </location>
    <ligand>
        <name>Mg(2+)</name>
        <dbReference type="ChEBI" id="CHEBI:18420"/>
        <label>2</label>
    </ligand>
</feature>
<feature type="binding site" evidence="1">
    <location>
        <position position="48"/>
    </location>
    <ligand>
        <name>Mg(2+)</name>
        <dbReference type="ChEBI" id="CHEBI:18420"/>
        <label>1</label>
    </ligand>
</feature>
<feature type="binding site" evidence="1">
    <location>
        <position position="70"/>
    </location>
    <ligand>
        <name>Mg(2+)</name>
        <dbReference type="ChEBI" id="CHEBI:18420"/>
        <label>1</label>
    </ligand>
</feature>
<feature type="binding site" evidence="1">
    <location>
        <position position="134"/>
    </location>
    <ligand>
        <name>Mg(2+)</name>
        <dbReference type="ChEBI" id="CHEBI:18420"/>
        <label>2</label>
    </ligand>
</feature>
<sequence length="153" mass="16888">MTPEVVIYTDGACSGNPGPGGWGAILIHGEREKELCGGEAATTNNRMELMAAIQALEALKRPCRVELHTDSQYVQKGIHEWIHGWKKRGWLTADKKPVKNDDLWKRLDAARLRHHVDWRWVKGHAGHELNERADALARKGLSEAAAARAAGGA</sequence>
<protein>
    <recommendedName>
        <fullName evidence="1">Ribonuclease H</fullName>
        <shortName evidence="1">RNase H</shortName>
        <ecNumber evidence="1">3.1.26.4</ecNumber>
    </recommendedName>
</protein>
<name>RNH_PHEZH</name>
<keyword id="KW-0963">Cytoplasm</keyword>
<keyword id="KW-0255">Endonuclease</keyword>
<keyword id="KW-0378">Hydrolase</keyword>
<keyword id="KW-0460">Magnesium</keyword>
<keyword id="KW-0479">Metal-binding</keyword>
<keyword id="KW-0540">Nuclease</keyword>
<keyword id="KW-1185">Reference proteome</keyword>
<evidence type="ECO:0000255" key="1">
    <source>
        <dbReference type="HAMAP-Rule" id="MF_00042"/>
    </source>
</evidence>
<evidence type="ECO:0000255" key="2">
    <source>
        <dbReference type="PROSITE-ProRule" id="PRU00408"/>
    </source>
</evidence>
<comment type="function">
    <text evidence="1">Endonuclease that specifically degrades the RNA of RNA-DNA hybrids.</text>
</comment>
<comment type="catalytic activity">
    <reaction evidence="1">
        <text>Endonucleolytic cleavage to 5'-phosphomonoester.</text>
        <dbReference type="EC" id="3.1.26.4"/>
    </reaction>
</comment>
<comment type="cofactor">
    <cofactor evidence="1">
        <name>Mg(2+)</name>
        <dbReference type="ChEBI" id="CHEBI:18420"/>
    </cofactor>
    <text evidence="1">Binds 1 Mg(2+) ion per subunit. May bind a second metal ion at a regulatory site, or after substrate binding.</text>
</comment>
<comment type="subunit">
    <text evidence="1">Monomer.</text>
</comment>
<comment type="subcellular location">
    <subcellularLocation>
        <location evidence="1">Cytoplasm</location>
    </subcellularLocation>
</comment>
<comment type="similarity">
    <text evidence="1">Belongs to the RNase H family.</text>
</comment>
<gene>
    <name evidence="1" type="primary">rnhA</name>
    <name type="ordered locus">PHZ_c2889</name>
</gene>